<feature type="chain" id="PRO_0000457909" description="Multiple C2 domain and transmembrane region protein 16">
    <location>
        <begin position="1"/>
        <end position="1049"/>
    </location>
</feature>
<feature type="transmembrane region" description="Helical" evidence="1">
    <location>
        <begin position="883"/>
        <end position="903"/>
    </location>
</feature>
<feature type="transmembrane region" description="Helical" evidence="1">
    <location>
        <begin position="989"/>
        <end position="1009"/>
    </location>
</feature>
<feature type="domain" description="C2 1" evidence="2">
    <location>
        <begin position="1"/>
        <end position="112"/>
    </location>
</feature>
<feature type="domain" description="C2 2" evidence="2">
    <location>
        <begin position="302"/>
        <end position="426"/>
    </location>
</feature>
<feature type="domain" description="C2 3" evidence="2">
    <location>
        <begin position="460"/>
        <end position="582"/>
    </location>
</feature>
<feature type="domain" description="C2 4" evidence="2">
    <location>
        <begin position="617"/>
        <end position="745"/>
    </location>
</feature>
<feature type="region of interest" description="Disordered" evidence="3">
    <location>
        <begin position="136"/>
        <end position="249"/>
    </location>
</feature>
<feature type="compositionally biased region" description="Basic and acidic residues" evidence="3">
    <location>
        <begin position="153"/>
        <end position="170"/>
    </location>
</feature>
<feature type="compositionally biased region" description="Basic and acidic residues" evidence="3">
    <location>
        <begin position="226"/>
        <end position="238"/>
    </location>
</feature>
<feature type="binding site" evidence="2">
    <location>
        <position position="338"/>
    </location>
    <ligand>
        <name>Ca(2+)</name>
        <dbReference type="ChEBI" id="CHEBI:29108"/>
        <label>1</label>
    </ligand>
</feature>
<feature type="binding site" evidence="2">
    <location>
        <position position="338"/>
    </location>
    <ligand>
        <name>Ca(2+)</name>
        <dbReference type="ChEBI" id="CHEBI:29108"/>
        <label>2</label>
    </ligand>
</feature>
<feature type="binding site" evidence="2">
    <location>
        <position position="390"/>
    </location>
    <ligand>
        <name>Ca(2+)</name>
        <dbReference type="ChEBI" id="CHEBI:29108"/>
        <label>1</label>
    </ligand>
</feature>
<feature type="binding site" evidence="2">
    <location>
        <position position="390"/>
    </location>
    <ligand>
        <name>Ca(2+)</name>
        <dbReference type="ChEBI" id="CHEBI:29108"/>
        <label>2</label>
    </ligand>
</feature>
<feature type="binding site" evidence="2">
    <location>
        <position position="393"/>
    </location>
    <ligand>
        <name>Ca(2+)</name>
        <dbReference type="ChEBI" id="CHEBI:29108"/>
        <label>1</label>
    </ligand>
</feature>
<feature type="binding site" evidence="2">
    <location>
        <position position="393"/>
    </location>
    <ligand>
        <name>Ca(2+)</name>
        <dbReference type="ChEBI" id="CHEBI:29108"/>
        <label>2</label>
    </ligand>
</feature>
<feature type="binding site" evidence="2">
    <location>
        <position position="398"/>
    </location>
    <ligand>
        <name>Ca(2+)</name>
        <dbReference type="ChEBI" id="CHEBI:29108"/>
        <label>2</label>
    </ligand>
</feature>
<accession>Q9FJG3</accession>
<keyword id="KW-0106">Calcium</keyword>
<keyword id="KW-0256">Endoplasmic reticulum</keyword>
<keyword id="KW-0472">Membrane</keyword>
<keyword id="KW-0479">Metal-binding</keyword>
<keyword id="KW-1185">Reference proteome</keyword>
<keyword id="KW-0677">Repeat</keyword>
<keyword id="KW-0812">Transmembrane</keyword>
<keyword id="KW-1133">Transmembrane helix</keyword>
<dbReference type="EMBL" id="AB015473">
    <property type="protein sequence ID" value="BAB08397.1"/>
    <property type="molecule type" value="Genomic_DNA"/>
</dbReference>
<dbReference type="EMBL" id="CP002688">
    <property type="protein sequence ID" value="AED92492.1"/>
    <property type="molecule type" value="Genomic_DNA"/>
</dbReference>
<dbReference type="RefSeq" id="NP_197299.1">
    <property type="nucleotide sequence ID" value="NM_121803.2"/>
</dbReference>
<dbReference type="SMR" id="Q9FJG3"/>
<dbReference type="FunCoup" id="Q9FJG3">
    <property type="interactions" value="421"/>
</dbReference>
<dbReference type="STRING" id="3702.Q9FJG3"/>
<dbReference type="iPTMnet" id="Q9FJG3"/>
<dbReference type="PaxDb" id="3702-AT5G17980.1"/>
<dbReference type="ProteomicsDB" id="189177"/>
<dbReference type="EnsemblPlants" id="AT5G17980.1">
    <property type="protein sequence ID" value="AT5G17980.1"/>
    <property type="gene ID" value="AT5G17980"/>
</dbReference>
<dbReference type="GeneID" id="831665"/>
<dbReference type="Gramene" id="AT5G17980.1">
    <property type="protein sequence ID" value="AT5G17980.1"/>
    <property type="gene ID" value="AT5G17980"/>
</dbReference>
<dbReference type="KEGG" id="ath:AT5G17980"/>
<dbReference type="Araport" id="AT5G17980"/>
<dbReference type="TAIR" id="AT5G17980">
    <property type="gene designation" value="MCTP16"/>
</dbReference>
<dbReference type="eggNOG" id="ENOG502QU3R">
    <property type="taxonomic scope" value="Eukaryota"/>
</dbReference>
<dbReference type="HOGENOM" id="CLU_003762_1_0_1"/>
<dbReference type="InParanoid" id="Q9FJG3"/>
<dbReference type="OMA" id="PMKTING"/>
<dbReference type="PRO" id="PR:Q9FJG3"/>
<dbReference type="Proteomes" id="UP000006548">
    <property type="component" value="Chromosome 5"/>
</dbReference>
<dbReference type="ExpressionAtlas" id="Q9FJG3">
    <property type="expression patterns" value="baseline and differential"/>
</dbReference>
<dbReference type="GO" id="GO:0005783">
    <property type="term" value="C:endoplasmic reticulum"/>
    <property type="evidence" value="ECO:0007005"/>
    <property type="project" value="TAIR"/>
</dbReference>
<dbReference type="GO" id="GO:0005789">
    <property type="term" value="C:endoplasmic reticulum membrane"/>
    <property type="evidence" value="ECO:0007669"/>
    <property type="project" value="UniProtKB-SubCell"/>
</dbReference>
<dbReference type="GO" id="GO:0009506">
    <property type="term" value="C:plasmodesma"/>
    <property type="evidence" value="ECO:0007005"/>
    <property type="project" value="TAIR"/>
</dbReference>
<dbReference type="GO" id="GO:0046872">
    <property type="term" value="F:metal ion binding"/>
    <property type="evidence" value="ECO:0007669"/>
    <property type="project" value="UniProtKB-KW"/>
</dbReference>
<dbReference type="CDD" id="cd04022">
    <property type="entry name" value="C2A_MCTP_PRT_plant"/>
    <property type="match status" value="1"/>
</dbReference>
<dbReference type="CDD" id="cd08378">
    <property type="entry name" value="C2B_MCTP_PRT_plant"/>
    <property type="match status" value="1"/>
</dbReference>
<dbReference type="CDD" id="cd04019">
    <property type="entry name" value="C2C_MCTP_PRT_plant"/>
    <property type="match status" value="1"/>
</dbReference>
<dbReference type="CDD" id="cd08379">
    <property type="entry name" value="C2D_MCTP_PRT_plant"/>
    <property type="match status" value="1"/>
</dbReference>
<dbReference type="FunFam" id="2.60.40.150:FF:000090">
    <property type="entry name" value="C2 domain-containing protein"/>
    <property type="match status" value="1"/>
</dbReference>
<dbReference type="Gene3D" id="2.60.40.150">
    <property type="entry name" value="C2 domain"/>
    <property type="match status" value="4"/>
</dbReference>
<dbReference type="InterPro" id="IPR000008">
    <property type="entry name" value="C2_dom"/>
</dbReference>
<dbReference type="InterPro" id="IPR035892">
    <property type="entry name" value="C2_domain_sf"/>
</dbReference>
<dbReference type="InterPro" id="IPR047257">
    <property type="entry name" value="C2B_MCTP_PRT_plant"/>
</dbReference>
<dbReference type="InterPro" id="IPR047258">
    <property type="entry name" value="C2C_MCTP_PRT_plant"/>
</dbReference>
<dbReference type="InterPro" id="IPR047255">
    <property type="entry name" value="C2D_MCTP_PRT_plant"/>
</dbReference>
<dbReference type="InterPro" id="IPR013583">
    <property type="entry name" value="MCTP_C"/>
</dbReference>
<dbReference type="InterPro" id="IPR047259">
    <property type="entry name" value="QUIRKY-like"/>
</dbReference>
<dbReference type="PANTHER" id="PTHR31425:SF35">
    <property type="entry name" value="MULTIPLE C2 DOMAIN AND TRANSMEMBRANE REGION PROTEIN 16"/>
    <property type="match status" value="1"/>
</dbReference>
<dbReference type="PANTHER" id="PTHR31425">
    <property type="entry name" value="PHOSPHORIBOSYLANTHRANILATE TRANSFERASE ISOFORM 1"/>
    <property type="match status" value="1"/>
</dbReference>
<dbReference type="Pfam" id="PF00168">
    <property type="entry name" value="C2"/>
    <property type="match status" value="4"/>
</dbReference>
<dbReference type="Pfam" id="PF08372">
    <property type="entry name" value="PRT_C"/>
    <property type="match status" value="1"/>
</dbReference>
<dbReference type="SMART" id="SM00239">
    <property type="entry name" value="C2"/>
    <property type="match status" value="4"/>
</dbReference>
<dbReference type="SUPFAM" id="SSF49562">
    <property type="entry name" value="C2 domain (Calcium/lipid-binding domain, CaLB)"/>
    <property type="match status" value="4"/>
</dbReference>
<dbReference type="PROSITE" id="PS50004">
    <property type="entry name" value="C2"/>
    <property type="match status" value="4"/>
</dbReference>
<evidence type="ECO:0000255" key="1"/>
<evidence type="ECO:0000255" key="2">
    <source>
        <dbReference type="PROSITE-ProRule" id="PRU00041"/>
    </source>
</evidence>
<evidence type="ECO:0000256" key="3">
    <source>
        <dbReference type="SAM" id="MobiDB-lite"/>
    </source>
</evidence>
<evidence type="ECO:0000269" key="4">
    <source>
    </source>
</evidence>
<evidence type="ECO:0000303" key="5">
    <source>
    </source>
</evidence>
<evidence type="ECO:0000305" key="6"/>
<evidence type="ECO:0000312" key="7">
    <source>
        <dbReference type="Araport" id="AT5G17980"/>
    </source>
</evidence>
<evidence type="ECO:0000312" key="8">
    <source>
        <dbReference type="EMBL" id="BAB08397.1"/>
    </source>
</evidence>
<proteinExistence type="evidence at transcript level"/>
<protein>
    <recommendedName>
        <fullName evidence="5">Multiple C2 domain and transmembrane region protein 16</fullName>
    </recommendedName>
</protein>
<reference key="1">
    <citation type="journal article" date="1998" name="DNA Res.">
        <title>Structural analysis of Arabidopsis thaliana chromosome 5. VII. Sequence features of the regions of 1,013,767 bp covered by sixteen physically assigned P1 and TAC clones.</title>
        <authorList>
            <person name="Nakamura Y."/>
            <person name="Sato S."/>
            <person name="Asamizu E."/>
            <person name="Kaneko T."/>
            <person name="Kotani H."/>
            <person name="Miyajima N."/>
            <person name="Tabata S."/>
        </authorList>
    </citation>
    <scope>NUCLEOTIDE SEQUENCE [LARGE SCALE GENOMIC DNA]</scope>
    <source>
        <strain>cv. Columbia</strain>
    </source>
</reference>
<reference key="2">
    <citation type="journal article" date="2017" name="Plant J.">
        <title>Araport11: a complete reannotation of the Arabidopsis thaliana reference genome.</title>
        <authorList>
            <person name="Cheng C.Y."/>
            <person name="Krishnakumar V."/>
            <person name="Chan A.P."/>
            <person name="Thibaud-Nissen F."/>
            <person name="Schobel S."/>
            <person name="Town C.D."/>
        </authorList>
    </citation>
    <scope>GENOME REANNOTATION</scope>
    <source>
        <strain>cv. Columbia</strain>
    </source>
</reference>
<reference key="3">
    <citation type="journal article" date="2018" name="Plant Physiol.">
        <title>Characterization of multiple C2 domain and transmembrane region proteins in Arabidopsis.</title>
        <authorList>
            <person name="Liu L."/>
            <person name="Li C."/>
            <person name="Liang Z."/>
            <person name="Yu H."/>
        </authorList>
    </citation>
    <scope>TISSUE SPECIFICITY</scope>
    <scope>DEVELOPMENTAL STAGE</scope>
    <scope>SUBCELLULAR LOCATION</scope>
    <scope>GENE FAMILY</scope>
    <scope>NOMENCLATURE</scope>
    <source>
        <strain>cv. Columbia</strain>
    </source>
</reference>
<comment type="function">
    <text evidence="5">May function as a signaling molecule by regulating the trafficking of other regulators.</text>
</comment>
<comment type="cofactor">
    <cofactor evidence="2">
        <name>Ca(2+)</name>
        <dbReference type="ChEBI" id="CHEBI:29108"/>
    </cofactor>
</comment>
<comment type="subcellular location">
    <subcellularLocation>
        <location evidence="4">Endoplasmic reticulum membrane</location>
        <topology evidence="1">Multi-pass membrane protein</topology>
    </subcellularLocation>
</comment>
<comment type="tissue specificity">
    <text evidence="4">Expressed in the vascular tissues of roots, cotyledons and rosette leaves (PubMed:29259105). Accumulates in roots meristems and shoot apical meristems (SAMs) (PubMed:29259105). Observed in flowers (PubMed:29259105).</text>
</comment>
<comment type="developmental stage">
    <text evidence="4">Present in developing flowers.</text>
</comment>
<comment type="similarity">
    <text evidence="6">Belongs to the MCTP family.</text>
</comment>
<name>MCT16_ARATH</name>
<organism>
    <name type="scientific">Arabidopsis thaliana</name>
    <name type="common">Mouse-ear cress</name>
    <dbReference type="NCBI Taxonomy" id="3702"/>
    <lineage>
        <taxon>Eukaryota</taxon>
        <taxon>Viridiplantae</taxon>
        <taxon>Streptophyta</taxon>
        <taxon>Embryophyta</taxon>
        <taxon>Tracheophyta</taxon>
        <taxon>Spermatophyta</taxon>
        <taxon>Magnoliopsida</taxon>
        <taxon>eudicotyledons</taxon>
        <taxon>Gunneridae</taxon>
        <taxon>Pentapetalae</taxon>
        <taxon>rosids</taxon>
        <taxon>malvids</taxon>
        <taxon>Brassicales</taxon>
        <taxon>Brassicaceae</taxon>
        <taxon>Camelineae</taxon>
        <taxon>Arabidopsis</taxon>
    </lineage>
</organism>
<sequence length="1049" mass="117931">MATTRKLVVEVVDAKDLTPKDGHGTSSPYVVLDYYGQRRRTRTIVRDLNPVWNETLEFSLAKRPSHQLFTDVLELDMYHDKNFGQTRRNNFLGRIRLGSDQFVGQGEEALIYYPLEKKSLFNLVQGEIGLRVYYADEKPPPLKPTVAPLETVVEEKTEETKAEGPDESKPPPETNDIPAEVKETVKPPQPPPEESSPAEGPKPDEEASPPLQENATVGGEEPPASESDKNEAEAKPVEEPPQNQPDGEDIVLESEDTMSWASAPRSPLPEVIISRSVSGSIPETKNGPQPLRRSVSETASYTSEISDVSTIERSTFDLVEKMHYVFIRVVKARSLPTSGSPVTKISLSGTMIQSKPARKTSCFEWDQTFAFLRDSPDLSSSPILEISVWDSSTGIETSQFLGGICFDVSEIPLRDPPDSPLAPQWYRLEGGGAHNSDLMLATWTGTQADESFPDAWKTDTAGNVTARAKVYMSSKLWYLRATVIEAQDLLPPQLTAFKEASFQLKAQLGSQVQKTKSAVTRNGAPSWNEDLLFVAAEPFSDQLVFTLEYRTSKGPVTVGMARVPLSAIERRVDDRLVASRWLGLEDPNDEKRGNRSRVHIRLCFDGGYHVMDEAAHVCSDYRPTARQLWKPAVGIVELGIIGCKNLLPMKTVNGKGSTDAYTVAKYGSKWVRTRTVSDSLDPKWNEQYTWKVYDPCTVLTIGVFDSWGVYEVDGGKEATRQDLRIGKVRIRISTLETGKAYRNTYPLLMLVNGGVKKLGEIELAVRFVRTAPPLDFLHVYTQPLLPLMHHIKPLSLFQEDMLRNTAVKILAAHLSRSEPPLRPEIVRYMLDADTHTFSMRKVRANWLRIVNVVAGMVDVVRWVDDTRFWKNPTSTLLVHALVVMLIWFPDLIVPTLAFYLFVIGAWNYRFRSRAALPHFDPRLSLADAADRDELDEEFDVVPSNRPPEMVRLRYDKLRNVGARVQTILGEVAAQGEKMQALVTWRDPRATGIFVGLCFFVALVLYLVPTKMVAMASGFYYFRHPIFRDRKPSPVLNFFRRLPSLSDRLM</sequence>
<gene>
    <name evidence="5" type="primary">MCTP16</name>
    <name evidence="7" type="ordered locus">At5g17980</name>
    <name evidence="8" type="ORF">MCM23.5</name>
</gene>